<organism>
    <name type="scientific">Histophilus somni (strain 129Pt)</name>
    <name type="common">Haemophilus somnus</name>
    <dbReference type="NCBI Taxonomy" id="205914"/>
    <lineage>
        <taxon>Bacteria</taxon>
        <taxon>Pseudomonadati</taxon>
        <taxon>Pseudomonadota</taxon>
        <taxon>Gammaproteobacteria</taxon>
        <taxon>Pasteurellales</taxon>
        <taxon>Pasteurellaceae</taxon>
        <taxon>Histophilus</taxon>
    </lineage>
</organism>
<evidence type="ECO:0000255" key="1">
    <source>
        <dbReference type="HAMAP-Rule" id="MF_01382"/>
    </source>
</evidence>
<evidence type="ECO:0000256" key="2">
    <source>
        <dbReference type="SAM" id="MobiDB-lite"/>
    </source>
</evidence>
<accession>Q0I375</accession>
<protein>
    <recommendedName>
        <fullName evidence="1">Protein translocase subunit SecA</fullName>
        <ecNumber evidence="1">7.4.2.8</ecNumber>
    </recommendedName>
</protein>
<proteinExistence type="inferred from homology"/>
<feature type="chain" id="PRO_0000320824" description="Protein translocase subunit SecA">
    <location>
        <begin position="1"/>
        <end position="898"/>
    </location>
</feature>
<feature type="region of interest" description="Disordered" evidence="2">
    <location>
        <begin position="855"/>
        <end position="898"/>
    </location>
</feature>
<feature type="compositionally biased region" description="Polar residues" evidence="2">
    <location>
        <begin position="855"/>
        <end position="865"/>
    </location>
</feature>
<feature type="compositionally biased region" description="Basic and acidic residues" evidence="2">
    <location>
        <begin position="866"/>
        <end position="876"/>
    </location>
</feature>
<feature type="compositionally biased region" description="Basic residues" evidence="2">
    <location>
        <begin position="886"/>
        <end position="898"/>
    </location>
</feature>
<feature type="binding site" evidence="1">
    <location>
        <position position="87"/>
    </location>
    <ligand>
        <name>ATP</name>
        <dbReference type="ChEBI" id="CHEBI:30616"/>
    </ligand>
</feature>
<feature type="binding site" evidence="1">
    <location>
        <begin position="105"/>
        <end position="109"/>
    </location>
    <ligand>
        <name>ATP</name>
        <dbReference type="ChEBI" id="CHEBI:30616"/>
    </ligand>
</feature>
<feature type="binding site" evidence="1">
    <location>
        <position position="512"/>
    </location>
    <ligand>
        <name>ATP</name>
        <dbReference type="ChEBI" id="CHEBI:30616"/>
    </ligand>
</feature>
<feature type="binding site" evidence="1">
    <location>
        <position position="880"/>
    </location>
    <ligand>
        <name>Zn(2+)</name>
        <dbReference type="ChEBI" id="CHEBI:29105"/>
    </ligand>
</feature>
<feature type="binding site" evidence="1">
    <location>
        <position position="882"/>
    </location>
    <ligand>
        <name>Zn(2+)</name>
        <dbReference type="ChEBI" id="CHEBI:29105"/>
    </ligand>
</feature>
<feature type="binding site" evidence="1">
    <location>
        <position position="891"/>
    </location>
    <ligand>
        <name>Zn(2+)</name>
        <dbReference type="ChEBI" id="CHEBI:29105"/>
    </ligand>
</feature>
<feature type="binding site" evidence="1">
    <location>
        <position position="892"/>
    </location>
    <ligand>
        <name>Zn(2+)</name>
        <dbReference type="ChEBI" id="CHEBI:29105"/>
    </ligand>
</feature>
<gene>
    <name evidence="1" type="primary">secA</name>
    <name type="ordered locus">HS_0990</name>
</gene>
<sequence>MLRTIVTKIFGSRNDRILRRLNKQVRIINKLEAEFELLTDEELKSKTTEFRTRLKNGEKLENLIPEAFATVREASKRILGMRPFDVQLIGGMVLNNRCIAEMRTGEGKTLTATLPCYLNALTGKGVHVVTVNDYLARRDAETNRPLFEFLGMTVGINVPGLSPEEKRAAYAADITYATNSELGFDYLRDNLAHSAQDRFQKHLHYALVDEVDSILIDEARTPLIISGPAEDSSELYMAMDKLIPILIQQDKEDTEEYQGDGDFTLDLKNKQAHLTERGQEKIEQWLMEKGFINENESLYSPARISLLHHIYAALRAHKLFERDVDYIVKNGEIVIVDEHTGRTMAGRRWSDGLHQAIEAKEGVQIQGENQTVASITYQNYFRLYEKLAGMTGTADTEAFEFQQIYGLETIVIPTNKPMIRDDRTDIMFENEKYKFDAIIEDIKDCVARNQPVLVGTISIEKSELLSNALNKAGIKHNVLNAKFHAQEAEIIANAGYPSAVTIATNMAGRGTDIVLGGNWKAEVAKLDDPTEEQIEEIKAAWQIRHDTVKQAGGLHIIGTERHESRRIDNQLRGRSGRQGDPGSSRFYLSLDDALMRIYLTEGKLNFMRKMFTEKGEGMESKMLAKVIAQAQAKVEAHNFDGRKNLLEFDDVANDQRHAIYEQRNALLDNEDIADTIQVIRQDVFNHVIDEYVPPHSLEEQWDIPALETRLKQDFALDLPLSKWLEEDNTFNEDVLRERVLTVAISEYKRKEELVGQETMRNFEKGVMLQTLDELWKEHLSAMDHLRRGIHLRGYAQKDPKQEYKKESFQMFTDMLDTLKLSVITTLSRVQIRTQDEVEKAEQARQKIAERENAAMQYQNNEGTSSLHEKSEHKIGRNESCPCGSGKKYKHCHGSKAKY</sequence>
<dbReference type="EC" id="7.4.2.8" evidence="1"/>
<dbReference type="EMBL" id="CP000436">
    <property type="protein sequence ID" value="ABI25265.1"/>
    <property type="molecule type" value="Genomic_DNA"/>
</dbReference>
<dbReference type="SMR" id="Q0I375"/>
<dbReference type="KEGG" id="hso:HS_0990"/>
<dbReference type="eggNOG" id="COG0653">
    <property type="taxonomic scope" value="Bacteria"/>
</dbReference>
<dbReference type="HOGENOM" id="CLU_005314_3_0_6"/>
<dbReference type="GO" id="GO:0031522">
    <property type="term" value="C:cell envelope Sec protein transport complex"/>
    <property type="evidence" value="ECO:0007669"/>
    <property type="project" value="TreeGrafter"/>
</dbReference>
<dbReference type="GO" id="GO:0005829">
    <property type="term" value="C:cytosol"/>
    <property type="evidence" value="ECO:0007669"/>
    <property type="project" value="TreeGrafter"/>
</dbReference>
<dbReference type="GO" id="GO:0005886">
    <property type="term" value="C:plasma membrane"/>
    <property type="evidence" value="ECO:0007669"/>
    <property type="project" value="UniProtKB-SubCell"/>
</dbReference>
<dbReference type="GO" id="GO:0005524">
    <property type="term" value="F:ATP binding"/>
    <property type="evidence" value="ECO:0007669"/>
    <property type="project" value="UniProtKB-UniRule"/>
</dbReference>
<dbReference type="GO" id="GO:0046872">
    <property type="term" value="F:metal ion binding"/>
    <property type="evidence" value="ECO:0007669"/>
    <property type="project" value="UniProtKB-KW"/>
</dbReference>
<dbReference type="GO" id="GO:0008564">
    <property type="term" value="F:protein-exporting ATPase activity"/>
    <property type="evidence" value="ECO:0007669"/>
    <property type="project" value="UniProtKB-EC"/>
</dbReference>
<dbReference type="GO" id="GO:0065002">
    <property type="term" value="P:intracellular protein transmembrane transport"/>
    <property type="evidence" value="ECO:0007669"/>
    <property type="project" value="UniProtKB-UniRule"/>
</dbReference>
<dbReference type="GO" id="GO:0017038">
    <property type="term" value="P:protein import"/>
    <property type="evidence" value="ECO:0007669"/>
    <property type="project" value="InterPro"/>
</dbReference>
<dbReference type="GO" id="GO:0006605">
    <property type="term" value="P:protein targeting"/>
    <property type="evidence" value="ECO:0007669"/>
    <property type="project" value="UniProtKB-UniRule"/>
</dbReference>
<dbReference type="GO" id="GO:0043952">
    <property type="term" value="P:protein transport by the Sec complex"/>
    <property type="evidence" value="ECO:0007669"/>
    <property type="project" value="TreeGrafter"/>
</dbReference>
<dbReference type="CDD" id="cd17928">
    <property type="entry name" value="DEXDc_SecA"/>
    <property type="match status" value="1"/>
</dbReference>
<dbReference type="CDD" id="cd18803">
    <property type="entry name" value="SF2_C_secA"/>
    <property type="match status" value="1"/>
</dbReference>
<dbReference type="FunFam" id="3.40.50.300:FF:000113">
    <property type="entry name" value="Preprotein translocase subunit SecA"/>
    <property type="match status" value="1"/>
</dbReference>
<dbReference type="FunFam" id="3.90.1440.10:FF:000001">
    <property type="entry name" value="Preprotein translocase subunit SecA"/>
    <property type="match status" value="1"/>
</dbReference>
<dbReference type="FunFam" id="1.10.3060.10:FF:000003">
    <property type="entry name" value="Protein translocase subunit SecA"/>
    <property type="match status" value="1"/>
</dbReference>
<dbReference type="Gene3D" id="1.10.3060.10">
    <property type="entry name" value="Helical scaffold and wing domains of SecA"/>
    <property type="match status" value="1"/>
</dbReference>
<dbReference type="Gene3D" id="3.40.50.300">
    <property type="entry name" value="P-loop containing nucleotide triphosphate hydrolases"/>
    <property type="match status" value="2"/>
</dbReference>
<dbReference type="Gene3D" id="3.90.1440.10">
    <property type="entry name" value="SecA, preprotein cross-linking domain"/>
    <property type="match status" value="1"/>
</dbReference>
<dbReference type="HAMAP" id="MF_01382">
    <property type="entry name" value="SecA"/>
    <property type="match status" value="1"/>
</dbReference>
<dbReference type="InterPro" id="IPR014001">
    <property type="entry name" value="Helicase_ATP-bd"/>
</dbReference>
<dbReference type="InterPro" id="IPR001650">
    <property type="entry name" value="Helicase_C-like"/>
</dbReference>
<dbReference type="InterPro" id="IPR027417">
    <property type="entry name" value="P-loop_NTPase"/>
</dbReference>
<dbReference type="InterPro" id="IPR004027">
    <property type="entry name" value="SEC_C_motif"/>
</dbReference>
<dbReference type="InterPro" id="IPR000185">
    <property type="entry name" value="SecA"/>
</dbReference>
<dbReference type="InterPro" id="IPR020937">
    <property type="entry name" value="SecA_CS"/>
</dbReference>
<dbReference type="InterPro" id="IPR011115">
    <property type="entry name" value="SecA_DEAD"/>
</dbReference>
<dbReference type="InterPro" id="IPR014018">
    <property type="entry name" value="SecA_motor_DEAD"/>
</dbReference>
<dbReference type="InterPro" id="IPR011130">
    <property type="entry name" value="SecA_preprotein_X-link_dom"/>
</dbReference>
<dbReference type="InterPro" id="IPR044722">
    <property type="entry name" value="SecA_SF2_C"/>
</dbReference>
<dbReference type="InterPro" id="IPR011116">
    <property type="entry name" value="SecA_Wing/Scaffold"/>
</dbReference>
<dbReference type="InterPro" id="IPR036266">
    <property type="entry name" value="SecA_Wing/Scaffold_sf"/>
</dbReference>
<dbReference type="InterPro" id="IPR036670">
    <property type="entry name" value="SecA_X-link_sf"/>
</dbReference>
<dbReference type="NCBIfam" id="NF009538">
    <property type="entry name" value="PRK12904.1"/>
    <property type="match status" value="1"/>
</dbReference>
<dbReference type="NCBIfam" id="TIGR00963">
    <property type="entry name" value="secA"/>
    <property type="match status" value="1"/>
</dbReference>
<dbReference type="PANTHER" id="PTHR30612:SF0">
    <property type="entry name" value="CHLOROPLAST PROTEIN-TRANSPORTING ATPASE"/>
    <property type="match status" value="1"/>
</dbReference>
<dbReference type="PANTHER" id="PTHR30612">
    <property type="entry name" value="SECA INNER MEMBRANE COMPONENT OF SEC PROTEIN SECRETION SYSTEM"/>
    <property type="match status" value="1"/>
</dbReference>
<dbReference type="Pfam" id="PF21090">
    <property type="entry name" value="P-loop_SecA"/>
    <property type="match status" value="1"/>
</dbReference>
<dbReference type="Pfam" id="PF02810">
    <property type="entry name" value="SEC-C"/>
    <property type="match status" value="1"/>
</dbReference>
<dbReference type="Pfam" id="PF07517">
    <property type="entry name" value="SecA_DEAD"/>
    <property type="match status" value="1"/>
</dbReference>
<dbReference type="Pfam" id="PF01043">
    <property type="entry name" value="SecA_PP_bind"/>
    <property type="match status" value="1"/>
</dbReference>
<dbReference type="Pfam" id="PF07516">
    <property type="entry name" value="SecA_SW"/>
    <property type="match status" value="1"/>
</dbReference>
<dbReference type="PRINTS" id="PR00906">
    <property type="entry name" value="SECA"/>
</dbReference>
<dbReference type="SMART" id="SM00957">
    <property type="entry name" value="SecA_DEAD"/>
    <property type="match status" value="1"/>
</dbReference>
<dbReference type="SMART" id="SM00958">
    <property type="entry name" value="SecA_PP_bind"/>
    <property type="match status" value="1"/>
</dbReference>
<dbReference type="SUPFAM" id="SSF81886">
    <property type="entry name" value="Helical scaffold and wing domains of SecA"/>
    <property type="match status" value="1"/>
</dbReference>
<dbReference type="SUPFAM" id="SSF52540">
    <property type="entry name" value="P-loop containing nucleoside triphosphate hydrolases"/>
    <property type="match status" value="2"/>
</dbReference>
<dbReference type="SUPFAM" id="SSF81767">
    <property type="entry name" value="Pre-protein crosslinking domain of SecA"/>
    <property type="match status" value="1"/>
</dbReference>
<dbReference type="PROSITE" id="PS01312">
    <property type="entry name" value="SECA"/>
    <property type="match status" value="1"/>
</dbReference>
<dbReference type="PROSITE" id="PS51196">
    <property type="entry name" value="SECA_MOTOR_DEAD"/>
    <property type="match status" value="1"/>
</dbReference>
<name>SECA_HISS1</name>
<comment type="function">
    <text evidence="1">Part of the Sec protein translocase complex. Interacts with the SecYEG preprotein conducting channel. Has a central role in coupling the hydrolysis of ATP to the transfer of proteins into and across the cell membrane, serving both as a receptor for the preprotein-SecB complex and as an ATP-driven molecular motor driving the stepwise translocation of polypeptide chains across the membrane.</text>
</comment>
<comment type="catalytic activity">
    <reaction evidence="1">
        <text>ATP + H2O + cellular proteinSide 1 = ADP + phosphate + cellular proteinSide 2.</text>
        <dbReference type="EC" id="7.4.2.8"/>
    </reaction>
</comment>
<comment type="cofactor">
    <cofactor evidence="1">
        <name>Zn(2+)</name>
        <dbReference type="ChEBI" id="CHEBI:29105"/>
    </cofactor>
    <text evidence="1">May bind 1 zinc ion per subunit.</text>
</comment>
<comment type="subunit">
    <text evidence="1">Monomer and homodimer. Part of the essential Sec protein translocation apparatus which comprises SecA, SecYEG and auxiliary proteins SecDF-YajC and YidC.</text>
</comment>
<comment type="subcellular location">
    <subcellularLocation>
        <location evidence="1">Cell inner membrane</location>
        <topology evidence="1">Peripheral membrane protein</topology>
        <orientation evidence="1">Cytoplasmic side</orientation>
    </subcellularLocation>
    <subcellularLocation>
        <location evidence="1">Cytoplasm</location>
    </subcellularLocation>
    <text evidence="1">Distribution is 50-50.</text>
</comment>
<comment type="similarity">
    <text evidence="1">Belongs to the SecA family.</text>
</comment>
<reference key="1">
    <citation type="journal article" date="2007" name="J. Bacteriol.">
        <title>Complete genome sequence of Haemophilus somnus (Histophilus somni) strain 129Pt and comparison to Haemophilus ducreyi 35000HP and Haemophilus influenzae Rd.</title>
        <authorList>
            <person name="Challacombe J.F."/>
            <person name="Duncan A.J."/>
            <person name="Brettin T.S."/>
            <person name="Bruce D."/>
            <person name="Chertkov O."/>
            <person name="Detter J.C."/>
            <person name="Han C.S."/>
            <person name="Misra M."/>
            <person name="Richardson P."/>
            <person name="Tapia R."/>
            <person name="Thayer N."/>
            <person name="Xie G."/>
            <person name="Inzana T.J."/>
        </authorList>
    </citation>
    <scope>NUCLEOTIDE SEQUENCE [LARGE SCALE GENOMIC DNA]</scope>
    <source>
        <strain>129Pt</strain>
    </source>
</reference>
<keyword id="KW-0067">ATP-binding</keyword>
<keyword id="KW-0997">Cell inner membrane</keyword>
<keyword id="KW-1003">Cell membrane</keyword>
<keyword id="KW-0963">Cytoplasm</keyword>
<keyword id="KW-0472">Membrane</keyword>
<keyword id="KW-0479">Metal-binding</keyword>
<keyword id="KW-0547">Nucleotide-binding</keyword>
<keyword id="KW-0653">Protein transport</keyword>
<keyword id="KW-1278">Translocase</keyword>
<keyword id="KW-0811">Translocation</keyword>
<keyword id="KW-0813">Transport</keyword>
<keyword id="KW-0862">Zinc</keyword>